<gene>
    <name evidence="1" type="primary">rplY</name>
    <name evidence="1" type="synonym">ctc</name>
    <name type="ordered locus">CTL0168</name>
</gene>
<feature type="chain" id="PRO_1000142504" description="Large ribosomal subunit protein bL25">
    <location>
        <begin position="1"/>
        <end position="185"/>
    </location>
</feature>
<keyword id="KW-0687">Ribonucleoprotein</keyword>
<keyword id="KW-0689">Ribosomal protein</keyword>
<keyword id="KW-0694">RNA-binding</keyword>
<keyword id="KW-0699">rRNA-binding</keyword>
<sequence length="185" mass="20425">MELVVQSRETDKKSVIKKIRQQGGIPAVLYSGGKSLANIVVDARVFSKFLSTLESGALASTVFTLSYEGREIKALVKDIQYHVTTYDVIHLDFEELVDGRDVRLNVPIRCINTVDCVGVKLGGSLRQVIRCIRVVCKPKDIVPFLELDVQSLGLSQTLKLSDICIPEGIRPVTSLKEVAVTVARR</sequence>
<accession>B0B926</accession>
<organism>
    <name type="scientific">Chlamydia trachomatis serovar L2 (strain ATCC VR-902B / DSM 19102 / 434/Bu)</name>
    <dbReference type="NCBI Taxonomy" id="471472"/>
    <lineage>
        <taxon>Bacteria</taxon>
        <taxon>Pseudomonadati</taxon>
        <taxon>Chlamydiota</taxon>
        <taxon>Chlamydiia</taxon>
        <taxon>Chlamydiales</taxon>
        <taxon>Chlamydiaceae</taxon>
        <taxon>Chlamydia/Chlamydophila group</taxon>
        <taxon>Chlamydia</taxon>
    </lineage>
</organism>
<dbReference type="EMBL" id="AM884176">
    <property type="protein sequence ID" value="CAP03613.1"/>
    <property type="molecule type" value="Genomic_DNA"/>
</dbReference>
<dbReference type="RefSeq" id="WP_009873414.1">
    <property type="nucleotide sequence ID" value="NC_010287.1"/>
</dbReference>
<dbReference type="RefSeq" id="YP_001654259.1">
    <property type="nucleotide sequence ID" value="NC_010287.1"/>
</dbReference>
<dbReference type="SMR" id="B0B926"/>
<dbReference type="KEGG" id="ctb:CTL0168"/>
<dbReference type="PATRIC" id="fig|471472.4.peg.182"/>
<dbReference type="HOGENOM" id="CLU_075939_2_1_0"/>
<dbReference type="Proteomes" id="UP001154402">
    <property type="component" value="Chromosome"/>
</dbReference>
<dbReference type="GO" id="GO:0022625">
    <property type="term" value="C:cytosolic large ribosomal subunit"/>
    <property type="evidence" value="ECO:0007669"/>
    <property type="project" value="TreeGrafter"/>
</dbReference>
<dbReference type="GO" id="GO:0008097">
    <property type="term" value="F:5S rRNA binding"/>
    <property type="evidence" value="ECO:0007669"/>
    <property type="project" value="InterPro"/>
</dbReference>
<dbReference type="GO" id="GO:0003735">
    <property type="term" value="F:structural constituent of ribosome"/>
    <property type="evidence" value="ECO:0007669"/>
    <property type="project" value="InterPro"/>
</dbReference>
<dbReference type="GO" id="GO:0006412">
    <property type="term" value="P:translation"/>
    <property type="evidence" value="ECO:0007669"/>
    <property type="project" value="UniProtKB-UniRule"/>
</dbReference>
<dbReference type="CDD" id="cd00495">
    <property type="entry name" value="Ribosomal_L25_TL5_CTC"/>
    <property type="match status" value="1"/>
</dbReference>
<dbReference type="FunFam" id="2.170.120.20:FF:000014">
    <property type="entry name" value="50S ribosomal protein L25"/>
    <property type="match status" value="1"/>
</dbReference>
<dbReference type="Gene3D" id="2.170.120.20">
    <property type="entry name" value="Ribosomal protein L25, beta domain"/>
    <property type="match status" value="1"/>
</dbReference>
<dbReference type="Gene3D" id="2.40.240.10">
    <property type="entry name" value="Ribosomal Protein L25, Chain P"/>
    <property type="match status" value="1"/>
</dbReference>
<dbReference type="HAMAP" id="MF_01334">
    <property type="entry name" value="Ribosomal_bL25_CTC"/>
    <property type="match status" value="1"/>
</dbReference>
<dbReference type="InterPro" id="IPR020056">
    <property type="entry name" value="Rbsml_bL25/Gln-tRNA_synth_N"/>
</dbReference>
<dbReference type="InterPro" id="IPR011035">
    <property type="entry name" value="Ribosomal_bL25/Gln-tRNA_synth"/>
</dbReference>
<dbReference type="InterPro" id="IPR020057">
    <property type="entry name" value="Ribosomal_bL25_b-dom"/>
</dbReference>
<dbReference type="InterPro" id="IPR037121">
    <property type="entry name" value="Ribosomal_bL25_C"/>
</dbReference>
<dbReference type="InterPro" id="IPR001021">
    <property type="entry name" value="Ribosomal_bL25_long"/>
</dbReference>
<dbReference type="InterPro" id="IPR029751">
    <property type="entry name" value="Ribosomal_L25_dom"/>
</dbReference>
<dbReference type="InterPro" id="IPR020930">
    <property type="entry name" value="Ribosomal_uL5_bac-type"/>
</dbReference>
<dbReference type="NCBIfam" id="TIGR00731">
    <property type="entry name" value="bL25_bact_ctc"/>
    <property type="match status" value="1"/>
</dbReference>
<dbReference type="NCBIfam" id="NF004129">
    <property type="entry name" value="PRK05618.1-4"/>
    <property type="match status" value="1"/>
</dbReference>
<dbReference type="PANTHER" id="PTHR33284">
    <property type="entry name" value="RIBOSOMAL PROTEIN L25/GLN-TRNA SYNTHETASE, ANTI-CODON-BINDING DOMAIN-CONTAINING PROTEIN"/>
    <property type="match status" value="1"/>
</dbReference>
<dbReference type="PANTHER" id="PTHR33284:SF1">
    <property type="entry name" value="RIBOSOMAL PROTEIN L25_GLN-TRNA SYNTHETASE, ANTI-CODON-BINDING DOMAIN-CONTAINING PROTEIN"/>
    <property type="match status" value="1"/>
</dbReference>
<dbReference type="Pfam" id="PF01386">
    <property type="entry name" value="Ribosomal_L25p"/>
    <property type="match status" value="1"/>
</dbReference>
<dbReference type="Pfam" id="PF14693">
    <property type="entry name" value="Ribosomal_TL5_C"/>
    <property type="match status" value="1"/>
</dbReference>
<dbReference type="SUPFAM" id="SSF50715">
    <property type="entry name" value="Ribosomal protein L25-like"/>
    <property type="match status" value="1"/>
</dbReference>
<comment type="function">
    <text evidence="1">This is one of the proteins that binds to the 5S RNA in the ribosome where it forms part of the central protuberance.</text>
</comment>
<comment type="subunit">
    <text evidence="1">Part of the 50S ribosomal subunit; part of the 5S rRNA/L5/L18/L25 subcomplex. Contacts the 5S rRNA. Binds to the 5S rRNA independently of L5 and L18.</text>
</comment>
<comment type="similarity">
    <text evidence="1">Belongs to the bacterial ribosomal protein bL25 family. CTC subfamily.</text>
</comment>
<proteinExistence type="inferred from homology"/>
<protein>
    <recommendedName>
        <fullName evidence="1">Large ribosomal subunit protein bL25</fullName>
    </recommendedName>
    <alternativeName>
        <fullName evidence="2">50S ribosomal protein L25</fullName>
    </alternativeName>
    <alternativeName>
        <fullName evidence="1">General stress protein CTC</fullName>
    </alternativeName>
</protein>
<reference key="1">
    <citation type="journal article" date="2008" name="Genome Res.">
        <title>Chlamydia trachomatis: genome sequence analysis of lymphogranuloma venereum isolates.</title>
        <authorList>
            <person name="Thomson N.R."/>
            <person name="Holden M.T.G."/>
            <person name="Carder C."/>
            <person name="Lennard N."/>
            <person name="Lockey S.J."/>
            <person name="Marsh P."/>
            <person name="Skipp P."/>
            <person name="O'Connor C.D."/>
            <person name="Goodhead I."/>
            <person name="Norbertzcak H."/>
            <person name="Harris B."/>
            <person name="Ormond D."/>
            <person name="Rance R."/>
            <person name="Quail M.A."/>
            <person name="Parkhill J."/>
            <person name="Stephens R.S."/>
            <person name="Clarke I.N."/>
        </authorList>
    </citation>
    <scope>NUCLEOTIDE SEQUENCE [LARGE SCALE GENOMIC DNA]</scope>
    <source>
        <strain>ATCC VR-902B / DSM 19102 / 434/Bu</strain>
    </source>
</reference>
<evidence type="ECO:0000255" key="1">
    <source>
        <dbReference type="HAMAP-Rule" id="MF_01334"/>
    </source>
</evidence>
<evidence type="ECO:0000305" key="2"/>
<name>RL25_CHLT2</name>